<accession>Q8R7W8</accession>
<evidence type="ECO:0000250" key="1"/>
<evidence type="ECO:0000305" key="2"/>
<organism>
    <name type="scientific">Caldanaerobacter subterraneus subsp. tengcongensis (strain DSM 15242 / JCM 11007 / NBRC 100824 / MB4)</name>
    <name type="common">Thermoanaerobacter tengcongensis</name>
    <dbReference type="NCBI Taxonomy" id="273068"/>
    <lineage>
        <taxon>Bacteria</taxon>
        <taxon>Bacillati</taxon>
        <taxon>Bacillota</taxon>
        <taxon>Clostridia</taxon>
        <taxon>Thermoanaerobacterales</taxon>
        <taxon>Thermoanaerobacteraceae</taxon>
        <taxon>Caldanaerobacter</taxon>
    </lineage>
</organism>
<sequence length="132" mass="14444">MVMTDPIADMLTRIRNANLARHETVEIPSSKMKKAIAMILLKEGFVKAVEEIDDGKGGILKITLKYGPNKERVISGLKRISKPGLRVYAKHDELPRVLGGLGIAIISTSKGIMTDKEARKAGLGGEVICYVW</sequence>
<reference key="1">
    <citation type="journal article" date="2002" name="Genome Res.">
        <title>A complete sequence of the T. tengcongensis genome.</title>
        <authorList>
            <person name="Bao Q."/>
            <person name="Tian Y."/>
            <person name="Li W."/>
            <person name="Xu Z."/>
            <person name="Xuan Z."/>
            <person name="Hu S."/>
            <person name="Dong W."/>
            <person name="Yang J."/>
            <person name="Chen Y."/>
            <person name="Xue Y."/>
            <person name="Xu Y."/>
            <person name="Lai X."/>
            <person name="Huang L."/>
            <person name="Dong X."/>
            <person name="Ma Y."/>
            <person name="Ling L."/>
            <person name="Tan H."/>
            <person name="Chen R."/>
            <person name="Wang J."/>
            <person name="Yu J."/>
            <person name="Yang H."/>
        </authorList>
    </citation>
    <scope>NUCLEOTIDE SEQUENCE [LARGE SCALE GENOMIC DNA]</scope>
    <source>
        <strain>DSM 15242 / JCM 11007 / NBRC 100824 / MB4</strain>
    </source>
</reference>
<keyword id="KW-1185">Reference proteome</keyword>
<keyword id="KW-0687">Ribonucleoprotein</keyword>
<keyword id="KW-0689">Ribosomal protein</keyword>
<keyword id="KW-0694">RNA-binding</keyword>
<keyword id="KW-0699">rRNA-binding</keyword>
<name>RS8_CALS4</name>
<protein>
    <recommendedName>
        <fullName evidence="2">Small ribosomal subunit protein uS8</fullName>
    </recommendedName>
    <alternativeName>
        <fullName>30S ribosomal protein S8</fullName>
    </alternativeName>
</protein>
<dbReference type="EMBL" id="AE008691">
    <property type="protein sequence ID" value="AAM25421.1"/>
    <property type="molecule type" value="Genomic_DNA"/>
</dbReference>
<dbReference type="RefSeq" id="WP_011026324.1">
    <property type="nucleotide sequence ID" value="NZ_JANUCV010000001.1"/>
</dbReference>
<dbReference type="SMR" id="Q8R7W8"/>
<dbReference type="STRING" id="273068.TTE2277"/>
<dbReference type="KEGG" id="tte:TTE2277"/>
<dbReference type="eggNOG" id="COG0096">
    <property type="taxonomic scope" value="Bacteria"/>
</dbReference>
<dbReference type="HOGENOM" id="CLU_098428_0_2_9"/>
<dbReference type="OrthoDB" id="9802617at2"/>
<dbReference type="Proteomes" id="UP000000555">
    <property type="component" value="Chromosome"/>
</dbReference>
<dbReference type="GO" id="GO:1990904">
    <property type="term" value="C:ribonucleoprotein complex"/>
    <property type="evidence" value="ECO:0007669"/>
    <property type="project" value="UniProtKB-KW"/>
</dbReference>
<dbReference type="GO" id="GO:0005840">
    <property type="term" value="C:ribosome"/>
    <property type="evidence" value="ECO:0007669"/>
    <property type="project" value="UniProtKB-KW"/>
</dbReference>
<dbReference type="GO" id="GO:0019843">
    <property type="term" value="F:rRNA binding"/>
    <property type="evidence" value="ECO:0007669"/>
    <property type="project" value="UniProtKB-UniRule"/>
</dbReference>
<dbReference type="GO" id="GO:0003735">
    <property type="term" value="F:structural constituent of ribosome"/>
    <property type="evidence" value="ECO:0007669"/>
    <property type="project" value="InterPro"/>
</dbReference>
<dbReference type="GO" id="GO:0006412">
    <property type="term" value="P:translation"/>
    <property type="evidence" value="ECO:0007669"/>
    <property type="project" value="UniProtKB-UniRule"/>
</dbReference>
<dbReference type="FunFam" id="3.30.1370.30:FF:000002">
    <property type="entry name" value="30S ribosomal protein S8"/>
    <property type="match status" value="1"/>
</dbReference>
<dbReference type="FunFam" id="3.30.1490.10:FF:000001">
    <property type="entry name" value="30S ribosomal protein S8"/>
    <property type="match status" value="1"/>
</dbReference>
<dbReference type="Gene3D" id="3.30.1370.30">
    <property type="match status" value="1"/>
</dbReference>
<dbReference type="Gene3D" id="3.30.1490.10">
    <property type="match status" value="1"/>
</dbReference>
<dbReference type="HAMAP" id="MF_01302_B">
    <property type="entry name" value="Ribosomal_uS8_B"/>
    <property type="match status" value="1"/>
</dbReference>
<dbReference type="InterPro" id="IPR000630">
    <property type="entry name" value="Ribosomal_uS8"/>
</dbReference>
<dbReference type="InterPro" id="IPR047863">
    <property type="entry name" value="Ribosomal_uS8_CS"/>
</dbReference>
<dbReference type="InterPro" id="IPR035987">
    <property type="entry name" value="Ribosomal_uS8_sf"/>
</dbReference>
<dbReference type="NCBIfam" id="NF001109">
    <property type="entry name" value="PRK00136.1"/>
    <property type="match status" value="1"/>
</dbReference>
<dbReference type="PANTHER" id="PTHR11758">
    <property type="entry name" value="40S RIBOSOMAL PROTEIN S15A"/>
    <property type="match status" value="1"/>
</dbReference>
<dbReference type="Pfam" id="PF00410">
    <property type="entry name" value="Ribosomal_S8"/>
    <property type="match status" value="1"/>
</dbReference>
<dbReference type="SUPFAM" id="SSF56047">
    <property type="entry name" value="Ribosomal protein S8"/>
    <property type="match status" value="1"/>
</dbReference>
<dbReference type="PROSITE" id="PS00053">
    <property type="entry name" value="RIBOSOMAL_S8"/>
    <property type="match status" value="1"/>
</dbReference>
<gene>
    <name type="primary">rpsH</name>
    <name type="ordered locus">TTE2277</name>
</gene>
<feature type="chain" id="PRO_0000126513" description="Small ribosomal subunit protein uS8">
    <location>
        <begin position="1"/>
        <end position="132"/>
    </location>
</feature>
<proteinExistence type="inferred from homology"/>
<comment type="function">
    <text evidence="1">One of the primary rRNA binding proteins, it binds directly to 16S rRNA central domain where it helps coordinate assembly of the platform of the 30S subunit.</text>
</comment>
<comment type="subunit">
    <text evidence="1">Part of the 30S ribosomal subunit. Contacts proteins S5 and S12 (By similarity).</text>
</comment>
<comment type="similarity">
    <text evidence="2">Belongs to the universal ribosomal protein uS8 family.</text>
</comment>